<name>DNLJ_NEIMB</name>
<dbReference type="EC" id="6.5.1.2" evidence="1"/>
<dbReference type="EMBL" id="AE002098">
    <property type="protein sequence ID" value="AAF41084.1"/>
    <property type="molecule type" value="Genomic_DNA"/>
</dbReference>
<dbReference type="PIR" id="F81172">
    <property type="entry name" value="F81172"/>
</dbReference>
<dbReference type="RefSeq" id="NP_273708.1">
    <property type="nucleotide sequence ID" value="NC_003112.2"/>
</dbReference>
<dbReference type="RefSeq" id="WP_002214202.1">
    <property type="nucleotide sequence ID" value="NC_003112.2"/>
</dbReference>
<dbReference type="SMR" id="Q9K0E3"/>
<dbReference type="FunCoup" id="Q9K0E3">
    <property type="interactions" value="403"/>
</dbReference>
<dbReference type="STRING" id="122586.NMB0666"/>
<dbReference type="PaxDb" id="122586-NMB0666"/>
<dbReference type="KEGG" id="nme:NMB0666"/>
<dbReference type="PATRIC" id="fig|122586.8.peg.834"/>
<dbReference type="HOGENOM" id="CLU_007764_2_1_4"/>
<dbReference type="InParanoid" id="Q9K0E3"/>
<dbReference type="OrthoDB" id="9759736at2"/>
<dbReference type="Proteomes" id="UP000000425">
    <property type="component" value="Chromosome"/>
</dbReference>
<dbReference type="GO" id="GO:0005829">
    <property type="term" value="C:cytosol"/>
    <property type="evidence" value="ECO:0000318"/>
    <property type="project" value="GO_Central"/>
</dbReference>
<dbReference type="GO" id="GO:0003911">
    <property type="term" value="F:DNA ligase (NAD+) activity"/>
    <property type="evidence" value="ECO:0000318"/>
    <property type="project" value="GO_Central"/>
</dbReference>
<dbReference type="GO" id="GO:0046872">
    <property type="term" value="F:metal ion binding"/>
    <property type="evidence" value="ECO:0007669"/>
    <property type="project" value="UniProtKB-KW"/>
</dbReference>
<dbReference type="GO" id="GO:0006281">
    <property type="term" value="P:DNA repair"/>
    <property type="evidence" value="ECO:0007669"/>
    <property type="project" value="UniProtKB-KW"/>
</dbReference>
<dbReference type="GO" id="GO:0006260">
    <property type="term" value="P:DNA replication"/>
    <property type="evidence" value="ECO:0007669"/>
    <property type="project" value="UniProtKB-KW"/>
</dbReference>
<dbReference type="CDD" id="cd17748">
    <property type="entry name" value="BRCT_DNA_ligase_like"/>
    <property type="match status" value="1"/>
</dbReference>
<dbReference type="CDD" id="cd00114">
    <property type="entry name" value="LIGANc"/>
    <property type="match status" value="1"/>
</dbReference>
<dbReference type="FunFam" id="1.10.150.20:FF:000006">
    <property type="entry name" value="DNA ligase"/>
    <property type="match status" value="1"/>
</dbReference>
<dbReference type="FunFam" id="1.10.287.610:FF:000002">
    <property type="entry name" value="DNA ligase"/>
    <property type="match status" value="1"/>
</dbReference>
<dbReference type="FunFam" id="2.40.50.140:FF:000012">
    <property type="entry name" value="DNA ligase"/>
    <property type="match status" value="1"/>
</dbReference>
<dbReference type="FunFam" id="3.30.470.30:FF:000001">
    <property type="entry name" value="DNA ligase"/>
    <property type="match status" value="1"/>
</dbReference>
<dbReference type="FunFam" id="3.40.50.10190:FF:000045">
    <property type="entry name" value="DNA ligase"/>
    <property type="match status" value="1"/>
</dbReference>
<dbReference type="Gene3D" id="6.20.10.30">
    <property type="match status" value="1"/>
</dbReference>
<dbReference type="Gene3D" id="1.10.150.20">
    <property type="entry name" value="5' to 3' exonuclease, C-terminal subdomain"/>
    <property type="match status" value="2"/>
</dbReference>
<dbReference type="Gene3D" id="3.40.50.10190">
    <property type="entry name" value="BRCT domain"/>
    <property type="match status" value="1"/>
</dbReference>
<dbReference type="Gene3D" id="3.30.470.30">
    <property type="entry name" value="DNA ligase/mRNA capping enzyme"/>
    <property type="match status" value="1"/>
</dbReference>
<dbReference type="Gene3D" id="1.10.287.610">
    <property type="entry name" value="Helix hairpin bin"/>
    <property type="match status" value="1"/>
</dbReference>
<dbReference type="Gene3D" id="2.40.50.140">
    <property type="entry name" value="Nucleic acid-binding proteins"/>
    <property type="match status" value="1"/>
</dbReference>
<dbReference type="HAMAP" id="MF_01588">
    <property type="entry name" value="DNA_ligase_A"/>
    <property type="match status" value="1"/>
</dbReference>
<dbReference type="InterPro" id="IPR001357">
    <property type="entry name" value="BRCT_dom"/>
</dbReference>
<dbReference type="InterPro" id="IPR036420">
    <property type="entry name" value="BRCT_dom_sf"/>
</dbReference>
<dbReference type="InterPro" id="IPR041663">
    <property type="entry name" value="DisA/LigA_HHH"/>
</dbReference>
<dbReference type="InterPro" id="IPR001679">
    <property type="entry name" value="DNA_ligase"/>
</dbReference>
<dbReference type="InterPro" id="IPR018239">
    <property type="entry name" value="DNA_ligase_AS"/>
</dbReference>
<dbReference type="InterPro" id="IPR033136">
    <property type="entry name" value="DNA_ligase_CS"/>
</dbReference>
<dbReference type="InterPro" id="IPR013839">
    <property type="entry name" value="DNAligase_adenylation"/>
</dbReference>
<dbReference type="InterPro" id="IPR013840">
    <property type="entry name" value="DNAligase_N"/>
</dbReference>
<dbReference type="InterPro" id="IPR012340">
    <property type="entry name" value="NA-bd_OB-fold"/>
</dbReference>
<dbReference type="InterPro" id="IPR004150">
    <property type="entry name" value="NAD_DNA_ligase_OB"/>
</dbReference>
<dbReference type="InterPro" id="IPR010994">
    <property type="entry name" value="RuvA_2-like"/>
</dbReference>
<dbReference type="InterPro" id="IPR004149">
    <property type="entry name" value="Znf_DNAligase_C4"/>
</dbReference>
<dbReference type="NCBIfam" id="TIGR00575">
    <property type="entry name" value="dnlj"/>
    <property type="match status" value="1"/>
</dbReference>
<dbReference type="NCBIfam" id="NF005932">
    <property type="entry name" value="PRK07956.1"/>
    <property type="match status" value="1"/>
</dbReference>
<dbReference type="PANTHER" id="PTHR23389">
    <property type="entry name" value="CHROMOSOME TRANSMISSION FIDELITY FACTOR 18"/>
    <property type="match status" value="1"/>
</dbReference>
<dbReference type="PANTHER" id="PTHR23389:SF9">
    <property type="entry name" value="DNA LIGASE"/>
    <property type="match status" value="1"/>
</dbReference>
<dbReference type="Pfam" id="PF00533">
    <property type="entry name" value="BRCT"/>
    <property type="match status" value="1"/>
</dbReference>
<dbReference type="Pfam" id="PF01653">
    <property type="entry name" value="DNA_ligase_aden"/>
    <property type="match status" value="1"/>
</dbReference>
<dbReference type="Pfam" id="PF03120">
    <property type="entry name" value="DNA_ligase_OB"/>
    <property type="match status" value="1"/>
</dbReference>
<dbReference type="Pfam" id="PF03119">
    <property type="entry name" value="DNA_ligase_ZBD"/>
    <property type="match status" value="1"/>
</dbReference>
<dbReference type="Pfam" id="PF12826">
    <property type="entry name" value="HHH_2"/>
    <property type="match status" value="1"/>
</dbReference>
<dbReference type="SMART" id="SM00292">
    <property type="entry name" value="BRCT"/>
    <property type="match status" value="1"/>
</dbReference>
<dbReference type="SMART" id="SM00532">
    <property type="entry name" value="LIGANc"/>
    <property type="match status" value="1"/>
</dbReference>
<dbReference type="SUPFAM" id="SSF52113">
    <property type="entry name" value="BRCT domain"/>
    <property type="match status" value="1"/>
</dbReference>
<dbReference type="SUPFAM" id="SSF56091">
    <property type="entry name" value="DNA ligase/mRNA capping enzyme, catalytic domain"/>
    <property type="match status" value="1"/>
</dbReference>
<dbReference type="SUPFAM" id="SSF50249">
    <property type="entry name" value="Nucleic acid-binding proteins"/>
    <property type="match status" value="1"/>
</dbReference>
<dbReference type="SUPFAM" id="SSF47781">
    <property type="entry name" value="RuvA domain 2-like"/>
    <property type="match status" value="1"/>
</dbReference>
<dbReference type="PROSITE" id="PS50172">
    <property type="entry name" value="BRCT"/>
    <property type="match status" value="1"/>
</dbReference>
<dbReference type="PROSITE" id="PS01055">
    <property type="entry name" value="DNA_LIGASE_N1"/>
    <property type="match status" value="1"/>
</dbReference>
<dbReference type="PROSITE" id="PS01056">
    <property type="entry name" value="DNA_LIGASE_N2"/>
    <property type="match status" value="1"/>
</dbReference>
<accession>Q9K0E3</accession>
<evidence type="ECO:0000255" key="1">
    <source>
        <dbReference type="HAMAP-Rule" id="MF_01588"/>
    </source>
</evidence>
<evidence type="ECO:0000256" key="2">
    <source>
        <dbReference type="SAM" id="MobiDB-lite"/>
    </source>
</evidence>
<reference key="1">
    <citation type="journal article" date="2000" name="Science">
        <title>Complete genome sequence of Neisseria meningitidis serogroup B strain MC58.</title>
        <authorList>
            <person name="Tettelin H."/>
            <person name="Saunders N.J."/>
            <person name="Heidelberg J.F."/>
            <person name="Jeffries A.C."/>
            <person name="Nelson K.E."/>
            <person name="Eisen J.A."/>
            <person name="Ketchum K.A."/>
            <person name="Hood D.W."/>
            <person name="Peden J.F."/>
            <person name="Dodson R.J."/>
            <person name="Nelson W.C."/>
            <person name="Gwinn M.L."/>
            <person name="DeBoy R.T."/>
            <person name="Peterson J.D."/>
            <person name="Hickey E.K."/>
            <person name="Haft D.H."/>
            <person name="Salzberg S.L."/>
            <person name="White O."/>
            <person name="Fleischmann R.D."/>
            <person name="Dougherty B.A."/>
            <person name="Mason T.M."/>
            <person name="Ciecko A."/>
            <person name="Parksey D.S."/>
            <person name="Blair E."/>
            <person name="Cittone H."/>
            <person name="Clark E.B."/>
            <person name="Cotton M.D."/>
            <person name="Utterback T.R."/>
            <person name="Khouri H.M."/>
            <person name="Qin H."/>
            <person name="Vamathevan J.J."/>
            <person name="Gill J."/>
            <person name="Scarlato V."/>
            <person name="Masignani V."/>
            <person name="Pizza M."/>
            <person name="Grandi G."/>
            <person name="Sun L."/>
            <person name="Smith H.O."/>
            <person name="Fraser C.M."/>
            <person name="Moxon E.R."/>
            <person name="Rappuoli R."/>
            <person name="Venter J.C."/>
        </authorList>
    </citation>
    <scope>NUCLEOTIDE SEQUENCE [LARGE SCALE GENOMIC DNA]</scope>
    <source>
        <strain>ATCC BAA-335 / MC58</strain>
    </source>
</reference>
<keyword id="KW-0227">DNA damage</keyword>
<keyword id="KW-0234">DNA repair</keyword>
<keyword id="KW-0235">DNA replication</keyword>
<keyword id="KW-0436">Ligase</keyword>
<keyword id="KW-0460">Magnesium</keyword>
<keyword id="KW-0464">Manganese</keyword>
<keyword id="KW-0479">Metal-binding</keyword>
<keyword id="KW-0520">NAD</keyword>
<keyword id="KW-1185">Reference proteome</keyword>
<keyword id="KW-0862">Zinc</keyword>
<proteinExistence type="inferred from homology"/>
<comment type="function">
    <text evidence="1">DNA ligase that catalyzes the formation of phosphodiester linkages between 5'-phosphoryl and 3'-hydroxyl groups in double-stranded DNA using NAD as a coenzyme and as the energy source for the reaction. It is essential for DNA replication and repair of damaged DNA.</text>
</comment>
<comment type="catalytic activity">
    <reaction evidence="1">
        <text>NAD(+) + (deoxyribonucleotide)n-3'-hydroxyl + 5'-phospho-(deoxyribonucleotide)m = (deoxyribonucleotide)n+m + AMP + beta-nicotinamide D-nucleotide.</text>
        <dbReference type="EC" id="6.5.1.2"/>
    </reaction>
</comment>
<comment type="cofactor">
    <cofactor evidence="1">
        <name>Mg(2+)</name>
        <dbReference type="ChEBI" id="CHEBI:18420"/>
    </cofactor>
    <cofactor evidence="1">
        <name>Mn(2+)</name>
        <dbReference type="ChEBI" id="CHEBI:29035"/>
    </cofactor>
</comment>
<comment type="similarity">
    <text evidence="1">Belongs to the NAD-dependent DNA ligase family. LigA subfamily.</text>
</comment>
<gene>
    <name evidence="1" type="primary">ligA</name>
    <name type="ordered locus">NMB0666</name>
</gene>
<sequence length="841" mass="92360">MNPNSKHNTNFTNLLKPSDSDIKQFAAQHICRLTDLLNRYAYEYYTLDAPSVPDAEYDKLFRELEALELNHPELKLPDSPTQRVGGEPLAGFAEVRHEVPMLSLTNAFSPQDENGVFDHAEMYAFDQRVRDGLDGGNPEYVIEPKFDGLAISLLYRDGVLVQAATRGDGTTGEDVTQNIKTVSNIPLRLHGENTPELIEVRGEVLMLKADFVALNKRQAENGQKPFANPRNAAAGSLRQLDSRITAQRKLHFFPYSVARQQDGFVAEEHIQELAYFQALGFSLPNGNFGCFKNIDEVLAFYEHMQQKRPELPYEIDGMVVKVNSLAQQHELGFISRAPRWAVAHKFPAEEALTIVEAIDVQIGRTGAVTPVARLQPVFVGGVTVTNATLHNQDEVSRKDVRVGDTVVVRRAGDVIPEVVRVIFERRPMRETAVAVSDGIGHRQDDLFAETPSANQTQSVPLHKPYRLPTHCPICRSEIEREEGEAVARCSGGMLCQAQRAQGLIHFASRKAMDIDGLGEKQIEQLVAQDLVRHFADLYRLDIPTLQKMKETADKTVAESDQMPSEGSSVGASGKHKKQPVKWAENILAGIEASKTPELARFLFALGIRHVGERTAKTLAQAFGTLERVRRAPEPVLACLPDIGTVVARSIAHFFAQAEQQAMIDELLAAGVAPQTQAVTIPPARHAEPQRWIARLPGFKISENKAQALWELAGKNIEGLQTDKALPTDWQAWRSEPQNAALLENLKTFFAQMPSEDEAAQGSDGINKAVAGKTFVLTGTLPTLKRDQAQSLIEAAGGKVSGSVSKKTDYVVAGEAAGSKLEKANALGVSVLSEAELLTLLG</sequence>
<feature type="chain" id="PRO_0000313332" description="DNA ligase">
    <location>
        <begin position="1"/>
        <end position="841"/>
    </location>
</feature>
<feature type="domain" description="BRCT" evidence="1">
    <location>
        <begin position="764"/>
        <end position="841"/>
    </location>
</feature>
<feature type="region of interest" description="Disordered" evidence="2">
    <location>
        <begin position="554"/>
        <end position="575"/>
    </location>
</feature>
<feature type="compositionally biased region" description="Polar residues" evidence="2">
    <location>
        <begin position="561"/>
        <end position="570"/>
    </location>
</feature>
<feature type="active site" description="N6-AMP-lysine intermediate" evidence="1">
    <location>
        <position position="145"/>
    </location>
</feature>
<feature type="binding site" evidence="1">
    <location>
        <begin position="54"/>
        <end position="58"/>
    </location>
    <ligand>
        <name>NAD(+)</name>
        <dbReference type="ChEBI" id="CHEBI:57540"/>
    </ligand>
</feature>
<feature type="binding site" evidence="1">
    <location>
        <begin position="103"/>
        <end position="104"/>
    </location>
    <ligand>
        <name>NAD(+)</name>
        <dbReference type="ChEBI" id="CHEBI:57540"/>
    </ligand>
</feature>
<feature type="binding site" evidence="1">
    <location>
        <position position="143"/>
    </location>
    <ligand>
        <name>NAD(+)</name>
        <dbReference type="ChEBI" id="CHEBI:57540"/>
    </ligand>
</feature>
<feature type="binding site" evidence="1">
    <location>
        <position position="166"/>
    </location>
    <ligand>
        <name>NAD(+)</name>
        <dbReference type="ChEBI" id="CHEBI:57540"/>
    </ligand>
</feature>
<feature type="binding site" evidence="1">
    <location>
        <position position="203"/>
    </location>
    <ligand>
        <name>NAD(+)</name>
        <dbReference type="ChEBI" id="CHEBI:57540"/>
    </ligand>
</feature>
<feature type="binding site" evidence="1">
    <location>
        <position position="321"/>
    </location>
    <ligand>
        <name>NAD(+)</name>
        <dbReference type="ChEBI" id="CHEBI:57540"/>
    </ligand>
</feature>
<feature type="binding site" evidence="1">
    <location>
        <position position="345"/>
    </location>
    <ligand>
        <name>NAD(+)</name>
        <dbReference type="ChEBI" id="CHEBI:57540"/>
    </ligand>
</feature>
<feature type="binding site" evidence="1">
    <location>
        <position position="471"/>
    </location>
    <ligand>
        <name>Zn(2+)</name>
        <dbReference type="ChEBI" id="CHEBI:29105"/>
    </ligand>
</feature>
<feature type="binding site" evidence="1">
    <location>
        <position position="474"/>
    </location>
    <ligand>
        <name>Zn(2+)</name>
        <dbReference type="ChEBI" id="CHEBI:29105"/>
    </ligand>
</feature>
<feature type="binding site" evidence="1">
    <location>
        <position position="489"/>
    </location>
    <ligand>
        <name>Zn(2+)</name>
        <dbReference type="ChEBI" id="CHEBI:29105"/>
    </ligand>
</feature>
<feature type="binding site" evidence="1">
    <location>
        <position position="495"/>
    </location>
    <ligand>
        <name>Zn(2+)</name>
        <dbReference type="ChEBI" id="CHEBI:29105"/>
    </ligand>
</feature>
<organism>
    <name type="scientific">Neisseria meningitidis serogroup B (strain ATCC BAA-335 / MC58)</name>
    <dbReference type="NCBI Taxonomy" id="122586"/>
    <lineage>
        <taxon>Bacteria</taxon>
        <taxon>Pseudomonadati</taxon>
        <taxon>Pseudomonadota</taxon>
        <taxon>Betaproteobacteria</taxon>
        <taxon>Neisseriales</taxon>
        <taxon>Neisseriaceae</taxon>
        <taxon>Neisseria</taxon>
    </lineage>
</organism>
<protein>
    <recommendedName>
        <fullName evidence="1">DNA ligase</fullName>
        <ecNumber evidence="1">6.5.1.2</ecNumber>
    </recommendedName>
    <alternativeName>
        <fullName evidence="1">Polydeoxyribonucleotide synthase [NAD(+)]</fullName>
    </alternativeName>
</protein>